<gene>
    <name type="primary">sarR</name>
    <name type="ordered locus">SAS2185</name>
</gene>
<feature type="initiator methionine" description="Removed" evidence="1">
    <location>
        <position position="1"/>
    </location>
</feature>
<feature type="chain" id="PRO_0000219588" description="HTH-type transcriptional regulator SarR">
    <location>
        <begin position="2"/>
        <end position="115"/>
    </location>
</feature>
<feature type="DNA-binding region" description="H-T-H motif" evidence="2">
    <location>
        <begin position="51"/>
        <end position="74"/>
    </location>
</feature>
<sequence>MSKINDINDLVNATFQVKKFFRDTKKKFNLNYEEIYILNHILRSESNEISSKEIAKCSEFKPYYLTKALQKLKDLKLLSKKRSLQDERTVIVYVTDTQKANIQKLISELEEYIKN</sequence>
<dbReference type="EMBL" id="BX571857">
    <property type="protein sequence ID" value="CAG43996.1"/>
    <property type="molecule type" value="Genomic_DNA"/>
</dbReference>
<dbReference type="RefSeq" id="WP_000036076.1">
    <property type="nucleotide sequence ID" value="NC_002953.3"/>
</dbReference>
<dbReference type="SMR" id="Q6G727"/>
<dbReference type="KEGG" id="sas:SAS2185"/>
<dbReference type="HOGENOM" id="CLU_164084_0_0_9"/>
<dbReference type="GO" id="GO:0005737">
    <property type="term" value="C:cytoplasm"/>
    <property type="evidence" value="ECO:0007669"/>
    <property type="project" value="UniProtKB-SubCell"/>
</dbReference>
<dbReference type="GO" id="GO:0003677">
    <property type="term" value="F:DNA binding"/>
    <property type="evidence" value="ECO:0007669"/>
    <property type="project" value="UniProtKB-KW"/>
</dbReference>
<dbReference type="GO" id="GO:0003700">
    <property type="term" value="F:DNA-binding transcription factor activity"/>
    <property type="evidence" value="ECO:0007669"/>
    <property type="project" value="InterPro"/>
</dbReference>
<dbReference type="GO" id="GO:0006950">
    <property type="term" value="P:response to stress"/>
    <property type="evidence" value="ECO:0007669"/>
    <property type="project" value="TreeGrafter"/>
</dbReference>
<dbReference type="FunFam" id="1.10.10.10:FF:000578">
    <property type="entry name" value="HTH-type transcriptional regulator SarR"/>
    <property type="match status" value="1"/>
</dbReference>
<dbReference type="Gene3D" id="1.10.10.10">
    <property type="entry name" value="Winged helix-like DNA-binding domain superfamily/Winged helix DNA-binding domain"/>
    <property type="match status" value="1"/>
</dbReference>
<dbReference type="InterPro" id="IPR039422">
    <property type="entry name" value="MarR/SlyA-like"/>
</dbReference>
<dbReference type="InterPro" id="IPR010166">
    <property type="entry name" value="SarA/Rot_dom"/>
</dbReference>
<dbReference type="InterPro" id="IPR055166">
    <property type="entry name" value="Transc_reg_Sar_Rot_HTH"/>
</dbReference>
<dbReference type="InterPro" id="IPR036388">
    <property type="entry name" value="WH-like_DNA-bd_sf"/>
</dbReference>
<dbReference type="InterPro" id="IPR036390">
    <property type="entry name" value="WH_DNA-bd_sf"/>
</dbReference>
<dbReference type="NCBIfam" id="TIGR01889">
    <property type="entry name" value="Staph_reg_Sar"/>
    <property type="match status" value="1"/>
</dbReference>
<dbReference type="PANTHER" id="PTHR33164:SF56">
    <property type="entry name" value="HTH-TYPE TRANSCRIPTIONAL REGULATOR MHQR"/>
    <property type="match status" value="1"/>
</dbReference>
<dbReference type="PANTHER" id="PTHR33164">
    <property type="entry name" value="TRANSCRIPTIONAL REGULATOR, MARR FAMILY"/>
    <property type="match status" value="1"/>
</dbReference>
<dbReference type="Pfam" id="PF22381">
    <property type="entry name" value="Staph_reg_Sar_Rot"/>
    <property type="match status" value="1"/>
</dbReference>
<dbReference type="SUPFAM" id="SSF46785">
    <property type="entry name" value="Winged helix' DNA-binding domain"/>
    <property type="match status" value="1"/>
</dbReference>
<reference key="1">
    <citation type="journal article" date="2004" name="Proc. Natl. Acad. Sci. U.S.A.">
        <title>Complete genomes of two clinical Staphylococcus aureus strains: evidence for the rapid evolution of virulence and drug resistance.</title>
        <authorList>
            <person name="Holden M.T.G."/>
            <person name="Feil E.J."/>
            <person name="Lindsay J.A."/>
            <person name="Peacock S.J."/>
            <person name="Day N.P.J."/>
            <person name="Enright M.C."/>
            <person name="Foster T.J."/>
            <person name="Moore C.E."/>
            <person name="Hurst L."/>
            <person name="Atkin R."/>
            <person name="Barron A."/>
            <person name="Bason N."/>
            <person name="Bentley S.D."/>
            <person name="Chillingworth C."/>
            <person name="Chillingworth T."/>
            <person name="Churcher C."/>
            <person name="Clark L."/>
            <person name="Corton C."/>
            <person name="Cronin A."/>
            <person name="Doggett J."/>
            <person name="Dowd L."/>
            <person name="Feltwell T."/>
            <person name="Hance Z."/>
            <person name="Harris B."/>
            <person name="Hauser H."/>
            <person name="Holroyd S."/>
            <person name="Jagels K."/>
            <person name="James K.D."/>
            <person name="Lennard N."/>
            <person name="Line A."/>
            <person name="Mayes R."/>
            <person name="Moule S."/>
            <person name="Mungall K."/>
            <person name="Ormond D."/>
            <person name="Quail M.A."/>
            <person name="Rabbinowitsch E."/>
            <person name="Rutherford K.M."/>
            <person name="Sanders M."/>
            <person name="Sharp S."/>
            <person name="Simmonds M."/>
            <person name="Stevens K."/>
            <person name="Whitehead S."/>
            <person name="Barrell B.G."/>
            <person name="Spratt B.G."/>
            <person name="Parkhill J."/>
        </authorList>
    </citation>
    <scope>NUCLEOTIDE SEQUENCE [LARGE SCALE GENOMIC DNA]</scope>
    <source>
        <strain>MSSA476</strain>
    </source>
</reference>
<proteinExistence type="inferred from homology"/>
<protein>
    <recommendedName>
        <fullName>HTH-type transcriptional regulator SarR</fullName>
    </recommendedName>
    <alternativeName>
        <fullName>Staphylococcal accessory regulator R</fullName>
    </alternativeName>
</protein>
<organism>
    <name type="scientific">Staphylococcus aureus (strain MSSA476)</name>
    <dbReference type="NCBI Taxonomy" id="282459"/>
    <lineage>
        <taxon>Bacteria</taxon>
        <taxon>Bacillati</taxon>
        <taxon>Bacillota</taxon>
        <taxon>Bacilli</taxon>
        <taxon>Bacillales</taxon>
        <taxon>Staphylococcaceae</taxon>
        <taxon>Staphylococcus</taxon>
    </lineage>
</organism>
<name>SARR_STAAS</name>
<comment type="function">
    <text evidence="1">Negative regulator of sarA transcription at late exponential and stationary growth phases. It contributes to the modulation of target genes downstream of the sarA regulatory cascade. Also, positively regulates expression of primary transcripts RNAII and RNAIII generated by agr (virulence accessory gene regulator) locus (By similarity).</text>
</comment>
<comment type="subunit">
    <text evidence="1">Homodimer.</text>
</comment>
<comment type="subcellular location">
    <subcellularLocation>
        <location evidence="1">Cytoplasm</location>
    </subcellularLocation>
</comment>
<comment type="similarity">
    <text evidence="3">Belongs to the SarA family.</text>
</comment>
<keyword id="KW-0010">Activator</keyword>
<keyword id="KW-0963">Cytoplasm</keyword>
<keyword id="KW-0238">DNA-binding</keyword>
<keyword id="KW-0678">Repressor</keyword>
<keyword id="KW-0804">Transcription</keyword>
<keyword id="KW-0805">Transcription regulation</keyword>
<keyword id="KW-0843">Virulence</keyword>
<evidence type="ECO:0000250" key="1"/>
<evidence type="ECO:0000255" key="2"/>
<evidence type="ECO:0000305" key="3"/>
<accession>Q6G727</accession>